<protein>
    <recommendedName>
        <fullName>Myosin-A</fullName>
    </recommendedName>
    <alternativeName>
        <fullName>PfM-A</fullName>
    </alternativeName>
</protein>
<comment type="function">
    <text evidence="1">Myosins are actin-based motor molecules with ATPase activity. Unconventional myosins serve in intracellular movements. Their highly divergent tails are presumed to bind to membranous compartments, which would be moved relative to actin filaments (By similarity).</text>
</comment>
<comment type="subunit">
    <text evidence="2">Component of the glideosome complex composed of GAP50, GAP45, MTIP and MyoA; the complex is formed during the late schizont stage and in merozoites. MyoA, MTIP and GAP45 probably form an initial complex in the cytoplasm which is then recruited to the outer face of the inner membrane complex via the interaction with GAP50. Interacts with ACT1.</text>
</comment>
<comment type="subcellular location">
    <subcellularLocation>
        <location evidence="1">Cell membrane</location>
        <topology evidence="1">Peripheral membrane protein</topology>
        <orientation evidence="1">Cytoplasmic side</orientation>
    </subcellularLocation>
    <text evidence="1">Tightly associated with the plasma membrane.</text>
</comment>
<comment type="domain">
    <text>This protein differs from the typical myosin heavy chain structure in having head and tail domains but no discernible neck domain.</text>
</comment>
<comment type="similarity">
    <text evidence="5">Belongs to the TRAFAC class myosin-kinesin ATPase superfamily. Myosin family.</text>
</comment>
<evidence type="ECO:0000250" key="1"/>
<evidence type="ECO:0000250" key="2">
    <source>
        <dbReference type="UniProtKB" id="Q8IDR3"/>
    </source>
</evidence>
<evidence type="ECO:0000255" key="3"/>
<evidence type="ECO:0000255" key="4">
    <source>
        <dbReference type="PROSITE-ProRule" id="PRU00782"/>
    </source>
</evidence>
<evidence type="ECO:0000305" key="5"/>
<proteinExistence type="evidence at transcript level"/>
<reference key="1">
    <citation type="journal article" date="2000" name="Mol. Biol. Cell">
        <title>A dibasic motif in the tail of a class XIV apicomplexan myosin is an essential determinant of plasma membrane localization.</title>
        <authorList>
            <person name="Hettmann C."/>
            <person name="Herm A."/>
            <person name="Geiter A."/>
            <person name="Frank B."/>
            <person name="Schwarz E."/>
            <person name="Soldati T."/>
            <person name="Soldati D."/>
        </authorList>
    </citation>
    <scope>NUCLEOTIDE SEQUENCE [MRNA]</scope>
</reference>
<reference key="2">
    <citation type="submission" date="1996-11" db="EMBL/GenBank/DDBJ databases">
        <authorList>
            <person name="Pinder J.C."/>
        </authorList>
    </citation>
    <scope>NUCLEOTIDE SEQUENCE [MRNA] OF 183-670</scope>
</reference>
<organism>
    <name type="scientific">Plasmodium falciparum (isolate FCBR / Columbia)</name>
    <dbReference type="NCBI Taxonomy" id="33631"/>
    <lineage>
        <taxon>Eukaryota</taxon>
        <taxon>Sar</taxon>
        <taxon>Alveolata</taxon>
        <taxon>Apicomplexa</taxon>
        <taxon>Aconoidasida</taxon>
        <taxon>Haemosporida</taxon>
        <taxon>Plasmodiidae</taxon>
        <taxon>Plasmodium</taxon>
        <taxon>Plasmodium (Laverania)</taxon>
    </lineage>
</organism>
<sequence length="818" mass="92277">MAVTNEEIKTASKIVRRVSNVEAFDKSGSVFKGYQIWTDISPTIENDPNIMFVKCVVQQGSKKEKLTVVQIDPPGTGTPYDIDPTHAWNCNSQVDPMSFGDIGLLNHTNIPCVLDFLKHRYLKNQIYTTAVPLIVAINPYKDLGNTTNEWIRRYRDTADHTKLPPHVFTCAREALSNLHGVNKSQTIIVSGESGAGKTEATKQIMRYFASSKSGNMDLRIQTAIMAANPVLEAFGNAKTIRNNNSSRFGRFMQLVISHEGGIRYGSVVAFLLEKSRIITQDDNERSYHIFYQFLKGANSTMKSKFGLKGVTEYKLLNPNSTEVSGVDDVKDFEEVIESLKNMELSESDIEVIFSIVAGILTLGNVRLIEKQEAGLSDAAAIMDEDMGVFNKACELMYLDPELIKREILIKVTVAGGTKIEGRWNKNDAEVLKSSLCKAMYEKLFLWIIRHLNSRIEPEGGFKTFMGMLDIFGFEVFKNNSLEQLFINITNEMLQKNFVDIVFERESKLYKDEGISTAELKYTSNKEVINVLCEKGKSVLSYLEDQCLAPGGTDEKFVSSCATNLKENNKFTPAKVASNKNFIIQHTIGPIQYCAESFLLKNKDVLRGDLVEVIKDSPNPIVQQLFEGQVIEKGKIAKGSLIGSQFLNQLTSLMNLINSTEPHFIRCIKPNENKKPLEWCEPKILIQLHALSILEALVLRQLGYSYRRTFEEFLYQYKFVDIAAAEDSSVENQNKCVNILKLSGLSESMYKIGKSMVFLKQEGAKILTKIQREKLVEWENCVSVIEAAILKHKYKQKVNKNIPSLLRVQAHIRKKMVAQ</sequence>
<feature type="chain" id="PRO_0000123375" description="Myosin-A">
    <location>
        <begin position="1"/>
        <end position="818"/>
    </location>
</feature>
<feature type="domain" description="Myosin motor" evidence="4">
    <location>
        <begin position="97"/>
        <end position="771"/>
    </location>
</feature>
<feature type="region of interest" description="Actin-binding" evidence="3">
    <location>
        <begin position="661"/>
        <end position="671"/>
    </location>
</feature>
<feature type="region of interest" description="Tail">
    <location>
        <begin position="773"/>
        <end position="818"/>
    </location>
</feature>
<feature type="binding site" evidence="1">
    <location>
        <begin position="191"/>
        <end position="198"/>
    </location>
    <ligand>
        <name>ATP</name>
        <dbReference type="ChEBI" id="CHEBI:30616"/>
    </ligand>
</feature>
<feature type="modified residue" description="Phosphoserine" evidence="2">
    <location>
        <position position="19"/>
    </location>
</feature>
<gene>
    <name evidence="5" type="primary">MyoA</name>
</gene>
<keyword id="KW-0009">Actin-binding</keyword>
<keyword id="KW-0067">ATP-binding</keyword>
<keyword id="KW-1003">Cell membrane</keyword>
<keyword id="KW-0472">Membrane</keyword>
<keyword id="KW-0505">Motor protein</keyword>
<keyword id="KW-0518">Myosin</keyword>
<keyword id="KW-0547">Nucleotide-binding</keyword>
<keyword id="KW-0597">Phosphoprotein</keyword>
<dbReference type="EMBL" id="AF105117">
    <property type="protein sequence ID" value="AAD21242.1"/>
    <property type="molecule type" value="mRNA"/>
</dbReference>
<dbReference type="EMBL" id="Y09693">
    <property type="protein sequence ID" value="CAA70869.1"/>
    <property type="molecule type" value="mRNA"/>
</dbReference>
<dbReference type="PIR" id="A59291">
    <property type="entry name" value="A59291"/>
</dbReference>
<dbReference type="SMR" id="Q9UAR6"/>
<dbReference type="GO" id="GO:0005737">
    <property type="term" value="C:cytoplasm"/>
    <property type="evidence" value="ECO:0007669"/>
    <property type="project" value="TreeGrafter"/>
</dbReference>
<dbReference type="GO" id="GO:0016459">
    <property type="term" value="C:myosin complex"/>
    <property type="evidence" value="ECO:0007669"/>
    <property type="project" value="UniProtKB-KW"/>
</dbReference>
<dbReference type="GO" id="GO:0005886">
    <property type="term" value="C:plasma membrane"/>
    <property type="evidence" value="ECO:0007669"/>
    <property type="project" value="UniProtKB-SubCell"/>
</dbReference>
<dbReference type="GO" id="GO:0051015">
    <property type="term" value="F:actin filament binding"/>
    <property type="evidence" value="ECO:0007669"/>
    <property type="project" value="TreeGrafter"/>
</dbReference>
<dbReference type="GO" id="GO:0005524">
    <property type="term" value="F:ATP binding"/>
    <property type="evidence" value="ECO:0007669"/>
    <property type="project" value="UniProtKB-KW"/>
</dbReference>
<dbReference type="GO" id="GO:0000146">
    <property type="term" value="F:microfilament motor activity"/>
    <property type="evidence" value="ECO:0007669"/>
    <property type="project" value="TreeGrafter"/>
</dbReference>
<dbReference type="GO" id="GO:0007015">
    <property type="term" value="P:actin filament organization"/>
    <property type="evidence" value="ECO:0007669"/>
    <property type="project" value="TreeGrafter"/>
</dbReference>
<dbReference type="CDD" id="cd14876">
    <property type="entry name" value="MYSc_Myo14"/>
    <property type="match status" value="1"/>
</dbReference>
<dbReference type="FunFam" id="1.10.10.820:FF:000001">
    <property type="entry name" value="Myosin heavy chain"/>
    <property type="match status" value="1"/>
</dbReference>
<dbReference type="FunFam" id="1.20.58.530:FF:000019">
    <property type="entry name" value="Myosin-A"/>
    <property type="match status" value="1"/>
</dbReference>
<dbReference type="Gene3D" id="1.10.10.820">
    <property type="match status" value="1"/>
</dbReference>
<dbReference type="Gene3D" id="1.20.5.4820">
    <property type="match status" value="1"/>
</dbReference>
<dbReference type="Gene3D" id="1.20.58.530">
    <property type="match status" value="1"/>
</dbReference>
<dbReference type="Gene3D" id="3.40.850.10">
    <property type="entry name" value="Kinesin motor domain"/>
    <property type="match status" value="1"/>
</dbReference>
<dbReference type="Gene3D" id="1.20.120.720">
    <property type="entry name" value="Myosin VI head, motor domain, U50 subdomain"/>
    <property type="match status" value="1"/>
</dbReference>
<dbReference type="InterPro" id="IPR036961">
    <property type="entry name" value="Kinesin_motor_dom_sf"/>
</dbReference>
<dbReference type="InterPro" id="IPR001609">
    <property type="entry name" value="Myosin_head_motor_dom-like"/>
</dbReference>
<dbReference type="InterPro" id="IPR036044">
    <property type="entry name" value="MYSc_Myo14"/>
</dbReference>
<dbReference type="InterPro" id="IPR027417">
    <property type="entry name" value="P-loop_NTPase"/>
</dbReference>
<dbReference type="PANTHER" id="PTHR13140">
    <property type="entry name" value="MYOSIN"/>
    <property type="match status" value="1"/>
</dbReference>
<dbReference type="PANTHER" id="PTHR13140:SF270">
    <property type="entry name" value="MYOSIN-12"/>
    <property type="match status" value="1"/>
</dbReference>
<dbReference type="Pfam" id="PF00063">
    <property type="entry name" value="Myosin_head"/>
    <property type="match status" value="1"/>
</dbReference>
<dbReference type="PRINTS" id="PR00193">
    <property type="entry name" value="MYOSINHEAVY"/>
</dbReference>
<dbReference type="SMART" id="SM00242">
    <property type="entry name" value="MYSc"/>
    <property type="match status" value="1"/>
</dbReference>
<dbReference type="SUPFAM" id="SSF52540">
    <property type="entry name" value="P-loop containing nucleoside triphosphate hydrolases"/>
    <property type="match status" value="1"/>
</dbReference>
<dbReference type="PROSITE" id="PS51456">
    <property type="entry name" value="MYOSIN_MOTOR"/>
    <property type="match status" value="1"/>
</dbReference>
<accession>Q9UAR6</accession>
<accession>P90624</accession>
<name>MYOA_PLAFB</name>